<name>KAX19_CENLM</name>
<organism>
    <name type="scientific">Centruroides limbatus</name>
    <name type="common">Bark scorpion</name>
    <dbReference type="NCBI Taxonomy" id="244936"/>
    <lineage>
        <taxon>Eukaryota</taxon>
        <taxon>Metazoa</taxon>
        <taxon>Ecdysozoa</taxon>
        <taxon>Arthropoda</taxon>
        <taxon>Chelicerata</taxon>
        <taxon>Arachnida</taxon>
        <taxon>Scorpiones</taxon>
        <taxon>Buthida</taxon>
        <taxon>Buthoidea</taxon>
        <taxon>Buthidae</taxon>
        <taxon>Centruroides</taxon>
    </lineage>
</organism>
<evidence type="ECO:0000250" key="1"/>
<evidence type="ECO:0000305" key="2"/>
<keyword id="KW-0903">Direct protein sequencing</keyword>
<keyword id="KW-0872">Ion channel impairing toxin</keyword>
<keyword id="KW-0528">Neurotoxin</keyword>
<keyword id="KW-0632">Potassium channel impairing toxin</keyword>
<keyword id="KW-0964">Secreted</keyword>
<keyword id="KW-0800">Toxin</keyword>
<keyword id="KW-1220">Voltage-gated potassium channel impairing toxin</keyword>
<dbReference type="SMR" id="P59848"/>
<dbReference type="GO" id="GO:0005576">
    <property type="term" value="C:extracellular region"/>
    <property type="evidence" value="ECO:0007669"/>
    <property type="project" value="UniProtKB-SubCell"/>
</dbReference>
<dbReference type="GO" id="GO:0008200">
    <property type="term" value="F:ion channel inhibitor activity"/>
    <property type="evidence" value="ECO:0007669"/>
    <property type="project" value="InterPro"/>
</dbReference>
<dbReference type="GO" id="GO:0015459">
    <property type="term" value="F:potassium channel regulator activity"/>
    <property type="evidence" value="ECO:0007669"/>
    <property type="project" value="UniProtKB-KW"/>
</dbReference>
<dbReference type="GO" id="GO:0090729">
    <property type="term" value="F:toxin activity"/>
    <property type="evidence" value="ECO:0007669"/>
    <property type="project" value="UniProtKB-KW"/>
</dbReference>
<dbReference type="FunFam" id="3.30.30.10:FF:000009">
    <property type="entry name" value="Potassium channel toxin alpha-KTx 4.3"/>
    <property type="match status" value="1"/>
</dbReference>
<dbReference type="Gene3D" id="3.30.30.10">
    <property type="entry name" value="Knottin, scorpion toxin-like"/>
    <property type="match status" value="1"/>
</dbReference>
<dbReference type="InterPro" id="IPR036574">
    <property type="entry name" value="Scorpion_toxin-like_sf"/>
</dbReference>
<dbReference type="InterPro" id="IPR001947">
    <property type="entry name" value="Scorpion_toxinS_K_inh"/>
</dbReference>
<dbReference type="Pfam" id="PF00451">
    <property type="entry name" value="Toxin_2"/>
    <property type="match status" value="1"/>
</dbReference>
<dbReference type="PRINTS" id="PR00286">
    <property type="entry name" value="CHARYBDTOXIN"/>
</dbReference>
<dbReference type="SUPFAM" id="SSF57095">
    <property type="entry name" value="Scorpion toxin-like"/>
    <property type="match status" value="1"/>
</dbReference>
<dbReference type="PROSITE" id="PS01138">
    <property type="entry name" value="SCORP_SHORT_TOXIN"/>
    <property type="match status" value="1"/>
</dbReference>
<feature type="chain" id="PRO_0000066833" description="Potassium channel toxin alpha-KTx 1.9">
    <location>
        <begin position="1"/>
        <end position="36" status="greater than"/>
    </location>
</feature>
<feature type="site" description="Basic residue of the functional dyad" evidence="1">
    <location>
        <position position="27"/>
    </location>
</feature>
<feature type="non-terminal residue">
    <location>
        <position position="36"/>
    </location>
</feature>
<comment type="function">
    <text evidence="1">Potent selective inhibitor of Kv1/KCNA voltage-gated potassium channels.</text>
</comment>
<comment type="subcellular location">
    <subcellularLocation>
        <location>Secreted</location>
    </subcellularLocation>
</comment>
<comment type="tissue specificity">
    <text>Expressed by the venom gland.</text>
</comment>
<comment type="domain">
    <text evidence="2">Has the structural arrangement of an alpha-helix connected to antiparallel beta-sheets by disulfide bonds (CS-alpha/beta).</text>
</comment>
<comment type="similarity">
    <text evidence="2">Belongs to the short scorpion toxin superfamily. Potassium channel inhibitor family. Alpha-KTx 01 subfamily.</text>
</comment>
<proteinExistence type="evidence at protein level"/>
<sequence>HFIDVKCTTSKECWPPCKAATGKAAGKCMNKKCKCQ</sequence>
<accession>P59848</accession>
<protein>
    <recommendedName>
        <fullName>Potassium channel toxin alpha-KTx 1.9</fullName>
    </recommendedName>
    <alternativeName>
        <fullName>Hongotoxin-2</fullName>
        <shortName>HgTX2</shortName>
    </alternativeName>
</protein>
<reference key="1">
    <citation type="journal article" date="1998" name="J. Biol. Chem.">
        <title>Subunit composition of brain voltage-gated potassium channels determined by hongotoxin-1, a novel peptide derived from Centruroides limbatus venom.</title>
        <authorList>
            <person name="Koschak A."/>
            <person name="Bugianesi R.M."/>
            <person name="Mitterdorfer J."/>
            <person name="Kaczorowski G.J."/>
            <person name="Garcia M.L."/>
            <person name="Knaus H.-G."/>
        </authorList>
    </citation>
    <scope>PROTEIN SEQUENCE</scope>
</reference>